<organism>
    <name type="scientific">Homo sapiens</name>
    <name type="common">Human</name>
    <dbReference type="NCBI Taxonomy" id="9606"/>
    <lineage>
        <taxon>Eukaryota</taxon>
        <taxon>Metazoa</taxon>
        <taxon>Chordata</taxon>
        <taxon>Craniata</taxon>
        <taxon>Vertebrata</taxon>
        <taxon>Euteleostomi</taxon>
        <taxon>Mammalia</taxon>
        <taxon>Eutheria</taxon>
        <taxon>Euarchontoglires</taxon>
        <taxon>Primates</taxon>
        <taxon>Haplorrhini</taxon>
        <taxon>Catarrhini</taxon>
        <taxon>Hominidae</taxon>
        <taxon>Homo</taxon>
    </lineage>
</organism>
<proteinExistence type="evidence at protein level"/>
<name>CCR7_HUMAN</name>
<evidence type="ECO:0000255" key="1"/>
<evidence type="ECO:0000255" key="2">
    <source>
        <dbReference type="PROSITE-ProRule" id="PRU00521"/>
    </source>
</evidence>
<evidence type="ECO:0000305" key="3"/>
<evidence type="ECO:0007829" key="4">
    <source>
        <dbReference type="PDB" id="6QZH"/>
    </source>
</evidence>
<keyword id="KW-0002">3D-structure</keyword>
<keyword id="KW-1003">Cell membrane</keyword>
<keyword id="KW-1015">Disulfide bond</keyword>
<keyword id="KW-0297">G-protein coupled receptor</keyword>
<keyword id="KW-0325">Glycoprotein</keyword>
<keyword id="KW-0472">Membrane</keyword>
<keyword id="KW-1267">Proteomics identification</keyword>
<keyword id="KW-0675">Receptor</keyword>
<keyword id="KW-1185">Reference proteome</keyword>
<keyword id="KW-0732">Signal</keyword>
<keyword id="KW-0807">Transducer</keyword>
<keyword id="KW-0812">Transmembrane</keyword>
<keyword id="KW-1133">Transmembrane helix</keyword>
<accession>P32248</accession>
<comment type="function">
    <text>Receptor for the MIP-3-beta chemokine. Probable mediator of EBV effects on B-lymphocytes or of normal lymphocyte functions.</text>
</comment>
<comment type="subcellular location">
    <subcellularLocation>
        <location>Cell membrane</location>
        <topology>Multi-pass membrane protein</topology>
    </subcellularLocation>
</comment>
<comment type="tissue specificity">
    <text>Expressed in various lymphoid tissues and activated B- and T-lymphocytes, strongly up-regulated in B-cells infected with Epstein-Barr virus and T-cells infected with herpesvirus 6 or 7.</text>
</comment>
<comment type="induction">
    <text>By Epstein-Barr virus (EBV).</text>
</comment>
<comment type="similarity">
    <text evidence="2">Belongs to the G-protein coupled receptor 1 family.</text>
</comment>
<comment type="online information" name="Wikipedia">
    <link uri="https://en.wikipedia.org/wiki/CC_chemokine_receptors"/>
    <text>CC chemokine receptors entry</text>
</comment>
<feature type="signal peptide" evidence="1">
    <location>
        <begin position="1"/>
        <end position="24"/>
    </location>
</feature>
<feature type="chain" id="PRO_0000012735" description="C-C chemokine receptor type 7">
    <location>
        <begin position="25"/>
        <end position="378"/>
    </location>
</feature>
<feature type="topological domain" description="Extracellular" evidence="1">
    <location>
        <begin position="25"/>
        <end position="59"/>
    </location>
</feature>
<feature type="transmembrane region" description="Helical; Name=1" evidence="1">
    <location>
        <begin position="60"/>
        <end position="86"/>
    </location>
</feature>
<feature type="topological domain" description="Cytoplasmic" evidence="1">
    <location>
        <begin position="87"/>
        <end position="95"/>
    </location>
</feature>
<feature type="transmembrane region" description="Helical; Name=2" evidence="1">
    <location>
        <begin position="96"/>
        <end position="116"/>
    </location>
</feature>
<feature type="topological domain" description="Extracellular" evidence="1">
    <location>
        <begin position="117"/>
        <end position="130"/>
    </location>
</feature>
<feature type="transmembrane region" description="Helical; Name=3" evidence="1">
    <location>
        <begin position="131"/>
        <end position="152"/>
    </location>
</feature>
<feature type="topological domain" description="Cytoplasmic" evidence="1">
    <location>
        <begin position="153"/>
        <end position="170"/>
    </location>
</feature>
<feature type="transmembrane region" description="Helical; Name=4" evidence="1">
    <location>
        <begin position="171"/>
        <end position="191"/>
    </location>
</feature>
<feature type="topological domain" description="Extracellular" evidence="1">
    <location>
        <begin position="192"/>
        <end position="219"/>
    </location>
</feature>
<feature type="transmembrane region" description="Helical; Name=5" evidence="1">
    <location>
        <begin position="220"/>
        <end position="247"/>
    </location>
</feature>
<feature type="topological domain" description="Cytoplasmic" evidence="1">
    <location>
        <begin position="248"/>
        <end position="263"/>
    </location>
</feature>
<feature type="transmembrane region" description="Helical; Name=6" evidence="1">
    <location>
        <begin position="264"/>
        <end position="289"/>
    </location>
</feature>
<feature type="topological domain" description="Extracellular" evidence="1">
    <location>
        <begin position="290"/>
        <end position="313"/>
    </location>
</feature>
<feature type="transmembrane region" description="Helical; Name=7" evidence="1">
    <location>
        <begin position="314"/>
        <end position="331"/>
    </location>
</feature>
<feature type="topological domain" description="Cytoplasmic" evidence="1">
    <location>
        <begin position="332"/>
        <end position="378"/>
    </location>
</feature>
<feature type="glycosylation site" description="N-linked (GlcNAc...) asparagine" evidence="1">
    <location>
        <position position="36"/>
    </location>
</feature>
<feature type="disulfide bond" evidence="2">
    <location>
        <begin position="129"/>
        <end position="210"/>
    </location>
</feature>
<feature type="sequence variant" id="VAR_049383" description="In dbSNP:rs2228015.">
    <original>M</original>
    <variation>V</variation>
    <location>
        <position position="7"/>
    </location>
</feature>
<feature type="sequence conflict" description="In Ref. 1; AAA58615." evidence="3" ref="1">
    <original>IW</original>
    <variation>SA</variation>
    <location>
        <begin position="182"/>
        <end position="183"/>
    </location>
</feature>
<feature type="sequence conflict" description="In Ref. 1; AAA58615." evidence="3" ref="1">
    <original>L</original>
    <variation>I</variation>
    <location>
        <position position="337"/>
    </location>
</feature>
<feature type="helix" evidence="4">
    <location>
        <begin position="56"/>
        <end position="84"/>
    </location>
</feature>
<feature type="helix" evidence="4">
    <location>
        <begin position="85"/>
        <end position="89"/>
    </location>
</feature>
<feature type="helix" evidence="4">
    <location>
        <begin position="92"/>
        <end position="108"/>
    </location>
</feature>
<feature type="helix" evidence="4">
    <location>
        <begin position="111"/>
        <end position="119"/>
    </location>
</feature>
<feature type="helix" evidence="4">
    <location>
        <begin position="125"/>
        <end position="157"/>
    </location>
</feature>
<feature type="helix" evidence="4">
    <location>
        <begin position="168"/>
        <end position="171"/>
    </location>
</feature>
<feature type="helix" evidence="4">
    <location>
        <begin position="173"/>
        <end position="190"/>
    </location>
</feature>
<feature type="helix" evidence="4">
    <location>
        <begin position="191"/>
        <end position="195"/>
    </location>
</feature>
<feature type="strand" evidence="4">
    <location>
        <begin position="196"/>
        <end position="200"/>
    </location>
</feature>
<feature type="strand" evidence="4">
    <location>
        <begin position="209"/>
        <end position="212"/>
    </location>
</feature>
<feature type="helix" evidence="4">
    <location>
        <begin position="221"/>
        <end position="231"/>
    </location>
</feature>
<feature type="helix" evidence="4">
    <location>
        <begin position="233"/>
        <end position="247"/>
    </location>
</feature>
<sequence>MDLGKPMKSVLVVALLVIFQVCLCQDEVTDDYIGDNTTVDYTLFESLCSKKDVRNFKAWFLPIMYSIICFVGLLGNGLVVLTYIYFKRLKTMTDTYLLNLAVADILFLLTLPFWAYSAAKSWVFGVHFCKLIFAIYKMSFFSGMLLLLCISIDRYVAIVQAVSAHRHRARVLLISKLSCVGIWILATVLSIPELLYSDLQRSSSEQAMRCSLITEHVEAFITIQVAQMVIGFLVPLLAMSFCYLVIIRTLLQARNFERNKAIKVIIAVVVVFIVFQLPYNGVVLAQTVANFNITSSTCELSKQLNIAYDVTYSLACVRCCVNPFLYAFIGVKFRNDLFKLFKDLGCLSQEQLRQWSSCRHIRRSSMSVEAETTTTFSP</sequence>
<reference key="1">
    <citation type="journal article" date="1993" name="J. Virol.">
        <title>Epstein-Barr virus-induced genes: first lymphocyte-specific G protein-coupled peptide receptors.</title>
        <authorList>
            <person name="Birkenbach M.P."/>
            <person name="Josefsen K."/>
            <person name="Yalamanchili R.R."/>
            <person name="Lenoir G.M."/>
            <person name="Kieff E."/>
        </authorList>
    </citation>
    <scope>NUCLEOTIDE SEQUENCE [MRNA]</scope>
</reference>
<reference key="2">
    <citation type="journal article" date="1994" name="Genomics">
        <title>Cloning of human and mouse EBI1, a lymphoid-specific G-protein-coupled receptor encoded on human chromosome 17q12-q21.2.</title>
        <authorList>
            <person name="Schweickart V.L."/>
            <person name="Raport C.J."/>
            <person name="Godiska R."/>
            <person name="Byers M.G."/>
            <person name="Eddy R.L. Jr."/>
            <person name="Shows T.B."/>
            <person name="Gray P.W."/>
        </authorList>
    </citation>
    <scope>NUCLEOTIDE SEQUENCE [GENOMIC DNA / MRNA]</scope>
    <source>
        <tissue>Placenta</tissue>
    </source>
</reference>
<reference key="3">
    <citation type="submission" date="2004-04" db="EMBL/GenBank/DDBJ databases">
        <title>cDNA clones of human proteins involved in signal transduction sequenced by the Guthrie cDNA resource center (www.cdna.org).</title>
        <authorList>
            <person name="Kopatz S.A."/>
            <person name="Aronstam R.S."/>
            <person name="Sharma S.V."/>
        </authorList>
    </citation>
    <scope>NUCLEOTIDE SEQUENCE [LARGE SCALE MRNA]</scope>
</reference>
<reference key="4">
    <citation type="journal article" date="2004" name="Genome Res.">
        <title>The status, quality, and expansion of the NIH full-length cDNA project: the Mammalian Gene Collection (MGC).</title>
        <authorList>
            <consortium name="The MGC Project Team"/>
        </authorList>
    </citation>
    <scope>NUCLEOTIDE SEQUENCE [LARGE SCALE MRNA]</scope>
    <source>
        <tissue>Brain</tissue>
    </source>
</reference>
<dbReference type="EMBL" id="L08176">
    <property type="protein sequence ID" value="AAA58615.1"/>
    <property type="molecule type" value="mRNA"/>
</dbReference>
<dbReference type="EMBL" id="L31584">
    <property type="protein sequence ID" value="AAA74230.1"/>
    <property type="molecule type" value="Genomic_DNA"/>
</dbReference>
<dbReference type="EMBL" id="L31582">
    <property type="protein sequence ID" value="AAA74230.1"/>
    <property type="status" value="JOINED"/>
    <property type="molecule type" value="Genomic_DNA"/>
</dbReference>
<dbReference type="EMBL" id="L31583">
    <property type="protein sequence ID" value="AAA74230.1"/>
    <property type="status" value="JOINED"/>
    <property type="molecule type" value="Genomic_DNA"/>
</dbReference>
<dbReference type="EMBL" id="L31581">
    <property type="protein sequence ID" value="AAA74231.1"/>
    <property type="molecule type" value="mRNA"/>
</dbReference>
<dbReference type="EMBL" id="AY587876">
    <property type="protein sequence ID" value="AAT52232.1"/>
    <property type="molecule type" value="mRNA"/>
</dbReference>
<dbReference type="EMBL" id="BC035343">
    <property type="protein sequence ID" value="AAH35343.1"/>
    <property type="molecule type" value="mRNA"/>
</dbReference>
<dbReference type="CCDS" id="CCDS11369.1"/>
<dbReference type="PIR" id="A45680">
    <property type="entry name" value="A45680"/>
</dbReference>
<dbReference type="PIR" id="B55735">
    <property type="entry name" value="B55735"/>
</dbReference>
<dbReference type="RefSeq" id="NP_001288643.1">
    <property type="nucleotide sequence ID" value="NM_001301714.1"/>
</dbReference>
<dbReference type="RefSeq" id="NP_001288645.1">
    <property type="nucleotide sequence ID" value="NM_001301716.1"/>
</dbReference>
<dbReference type="RefSeq" id="NP_001288646.1">
    <property type="nucleotide sequence ID" value="NM_001301717.1"/>
</dbReference>
<dbReference type="RefSeq" id="NP_001288647.1">
    <property type="nucleotide sequence ID" value="NM_001301718.1"/>
</dbReference>
<dbReference type="RefSeq" id="NP_001829.1">
    <property type="nucleotide sequence ID" value="NM_001838.4"/>
</dbReference>
<dbReference type="PDB" id="6QZH">
    <property type="method" value="X-ray"/>
    <property type="resolution" value="2.10 A"/>
    <property type="chains" value="A=46-247"/>
</dbReference>
<dbReference type="PDBsum" id="6QZH"/>
<dbReference type="SMR" id="P32248"/>
<dbReference type="BioGRID" id="107641">
    <property type="interactions" value="3"/>
</dbReference>
<dbReference type="CORUM" id="P32248"/>
<dbReference type="DIP" id="DIP-5855N"/>
<dbReference type="FunCoup" id="P32248">
    <property type="interactions" value="750"/>
</dbReference>
<dbReference type="IntAct" id="P32248">
    <property type="interactions" value="4"/>
</dbReference>
<dbReference type="MINT" id="P32248"/>
<dbReference type="STRING" id="9606.ENSP00000246657"/>
<dbReference type="BindingDB" id="P32248"/>
<dbReference type="ChEMBL" id="CHEMBL4594"/>
<dbReference type="GuidetoPHARMACOLOGY" id="64"/>
<dbReference type="GlyCosmos" id="P32248">
    <property type="glycosylation" value="1 site, No reported glycans"/>
</dbReference>
<dbReference type="GlyGen" id="P32248">
    <property type="glycosylation" value="1 site"/>
</dbReference>
<dbReference type="iPTMnet" id="P32248"/>
<dbReference type="PhosphoSitePlus" id="P32248"/>
<dbReference type="BioMuta" id="CCR7"/>
<dbReference type="DMDM" id="1352335"/>
<dbReference type="MassIVE" id="P32248"/>
<dbReference type="PaxDb" id="9606-ENSP00000246657"/>
<dbReference type="PeptideAtlas" id="P32248"/>
<dbReference type="ProteomicsDB" id="54856"/>
<dbReference type="ABCD" id="P32248">
    <property type="antibodies" value="3 sequenced antibodies"/>
</dbReference>
<dbReference type="Antibodypedia" id="3533">
    <property type="antibodies" value="1140 antibodies from 48 providers"/>
</dbReference>
<dbReference type="DNASU" id="1236"/>
<dbReference type="Ensembl" id="ENST00000246657.2">
    <property type="protein sequence ID" value="ENSP00000246657.2"/>
    <property type="gene ID" value="ENSG00000126353.4"/>
</dbReference>
<dbReference type="GeneID" id="1236"/>
<dbReference type="KEGG" id="hsa:1236"/>
<dbReference type="MANE-Select" id="ENST00000246657.2">
    <property type="protein sequence ID" value="ENSP00000246657.2"/>
    <property type="RefSeq nucleotide sequence ID" value="NM_001838.4"/>
    <property type="RefSeq protein sequence ID" value="NP_001829.1"/>
</dbReference>
<dbReference type="UCSC" id="uc002huw.4">
    <property type="organism name" value="human"/>
</dbReference>
<dbReference type="AGR" id="HGNC:1608"/>
<dbReference type="CTD" id="1236"/>
<dbReference type="DisGeNET" id="1236"/>
<dbReference type="GeneCards" id="CCR7"/>
<dbReference type="HGNC" id="HGNC:1608">
    <property type="gene designation" value="CCR7"/>
</dbReference>
<dbReference type="HPA" id="ENSG00000126353">
    <property type="expression patterns" value="Tissue enhanced (intestine, lymphoid tissue)"/>
</dbReference>
<dbReference type="MIM" id="600242">
    <property type="type" value="gene"/>
</dbReference>
<dbReference type="neXtProt" id="NX_P32248"/>
<dbReference type="OpenTargets" id="ENSG00000126353"/>
<dbReference type="PharmGKB" id="PA26172"/>
<dbReference type="VEuPathDB" id="HostDB:ENSG00000126353"/>
<dbReference type="eggNOG" id="ENOG502QUZ9">
    <property type="taxonomic scope" value="Eukaryota"/>
</dbReference>
<dbReference type="GeneTree" id="ENSGT01030000234667"/>
<dbReference type="InParanoid" id="P32248"/>
<dbReference type="OMA" id="TLACFRC"/>
<dbReference type="OrthoDB" id="9944829at2759"/>
<dbReference type="PAN-GO" id="P32248">
    <property type="GO annotations" value="8 GO annotations based on evolutionary models"/>
</dbReference>
<dbReference type="PhylomeDB" id="P32248"/>
<dbReference type="TreeFam" id="TF330966"/>
<dbReference type="PathwayCommons" id="P32248"/>
<dbReference type="Reactome" id="R-HSA-380108">
    <property type="pathway name" value="Chemokine receptors bind chemokines"/>
</dbReference>
<dbReference type="Reactome" id="R-HSA-418594">
    <property type="pathway name" value="G alpha (i) signalling events"/>
</dbReference>
<dbReference type="SignaLink" id="P32248"/>
<dbReference type="SIGNOR" id="P32248"/>
<dbReference type="BioGRID-ORCS" id="1236">
    <property type="hits" value="6 hits in 1148 CRISPR screens"/>
</dbReference>
<dbReference type="GeneWiki" id="C-C_chemokine_receptor_type_7"/>
<dbReference type="GenomeRNAi" id="1236"/>
<dbReference type="Pharos" id="P32248">
    <property type="development level" value="Tchem"/>
</dbReference>
<dbReference type="PRO" id="PR:P32248"/>
<dbReference type="Proteomes" id="UP000005640">
    <property type="component" value="Chromosome 17"/>
</dbReference>
<dbReference type="RNAct" id="P32248">
    <property type="molecule type" value="protein"/>
</dbReference>
<dbReference type="Bgee" id="ENSG00000126353">
    <property type="expression patterns" value="Expressed in vermiform appendix and 106 other cell types or tissues"/>
</dbReference>
<dbReference type="ExpressionAtlas" id="P32248">
    <property type="expression patterns" value="baseline and differential"/>
</dbReference>
<dbReference type="GO" id="GO:0009986">
    <property type="term" value="C:cell surface"/>
    <property type="evidence" value="ECO:0000314"/>
    <property type="project" value="UniProtKB"/>
</dbReference>
<dbReference type="GO" id="GO:0009897">
    <property type="term" value="C:external side of plasma membrane"/>
    <property type="evidence" value="ECO:0000318"/>
    <property type="project" value="GO_Central"/>
</dbReference>
<dbReference type="GO" id="GO:0005739">
    <property type="term" value="C:mitochondrion"/>
    <property type="evidence" value="ECO:0000314"/>
    <property type="project" value="HPA"/>
</dbReference>
<dbReference type="GO" id="GO:0005886">
    <property type="term" value="C:plasma membrane"/>
    <property type="evidence" value="ECO:0000314"/>
    <property type="project" value="BHF-UCL"/>
</dbReference>
<dbReference type="GO" id="GO:0016493">
    <property type="term" value="F:C-C chemokine receptor activity"/>
    <property type="evidence" value="ECO:0000250"/>
    <property type="project" value="BHF-UCL"/>
</dbReference>
<dbReference type="GO" id="GO:0038117">
    <property type="term" value="F:C-C motif chemokine 19 receptor activity"/>
    <property type="evidence" value="ECO:0000314"/>
    <property type="project" value="UniProtKB"/>
</dbReference>
<dbReference type="GO" id="GO:0038121">
    <property type="term" value="F:C-C motif chemokine 21 receptor activity"/>
    <property type="evidence" value="ECO:0000314"/>
    <property type="project" value="UniProtKB"/>
</dbReference>
<dbReference type="GO" id="GO:0035757">
    <property type="term" value="F:chemokine (C-C motif) ligand 19 binding"/>
    <property type="evidence" value="ECO:0000353"/>
    <property type="project" value="BHF-UCL"/>
</dbReference>
<dbReference type="GO" id="GO:0035758">
    <property type="term" value="F:chemokine (C-C motif) ligand 21 binding"/>
    <property type="evidence" value="ECO:0000353"/>
    <property type="project" value="BHF-UCL"/>
</dbReference>
<dbReference type="GO" id="GO:0004930">
    <property type="term" value="F:G protein-coupled receptor activity"/>
    <property type="evidence" value="ECO:0000304"/>
    <property type="project" value="BHF-UCL"/>
</dbReference>
<dbReference type="GO" id="GO:0019722">
    <property type="term" value="P:calcium-mediated signaling"/>
    <property type="evidence" value="ECO:0000318"/>
    <property type="project" value="GO_Central"/>
</dbReference>
<dbReference type="GO" id="GO:0038119">
    <property type="term" value="P:CCL19-activated CCR7 signaling pathway"/>
    <property type="evidence" value="ECO:0000314"/>
    <property type="project" value="BHF-UCL"/>
</dbReference>
<dbReference type="GO" id="GO:0038120">
    <property type="term" value="P:CCL21-activated CCR7 signaling pathway"/>
    <property type="evidence" value="ECO:0000314"/>
    <property type="project" value="BHF-UCL"/>
</dbReference>
<dbReference type="GO" id="GO:0060326">
    <property type="term" value="P:cell chemotaxis"/>
    <property type="evidence" value="ECO:0000318"/>
    <property type="project" value="GO_Central"/>
</dbReference>
<dbReference type="GO" id="GO:0071345">
    <property type="term" value="P:cellular response to cytokine stimulus"/>
    <property type="evidence" value="ECO:0000314"/>
    <property type="project" value="BHF-UCL"/>
</dbReference>
<dbReference type="GO" id="GO:0071380">
    <property type="term" value="P:cellular response to prostaglandin E stimulus"/>
    <property type="evidence" value="ECO:0000314"/>
    <property type="project" value="BHF-UCL"/>
</dbReference>
<dbReference type="GO" id="GO:0002407">
    <property type="term" value="P:dendritic cell chemotaxis"/>
    <property type="evidence" value="ECO:0000305"/>
    <property type="project" value="BHF-UCL"/>
</dbReference>
<dbReference type="GO" id="GO:0001768">
    <property type="term" value="P:establishment of T cell polarity"/>
    <property type="evidence" value="ECO:0000305"/>
    <property type="project" value="BHF-UCL"/>
</dbReference>
<dbReference type="GO" id="GO:0007186">
    <property type="term" value="P:G protein-coupled receptor signaling pathway"/>
    <property type="evidence" value="ECO:0000304"/>
    <property type="project" value="BHF-UCL"/>
</dbReference>
<dbReference type="GO" id="GO:0048872">
    <property type="term" value="P:homeostasis of number of cells"/>
    <property type="evidence" value="ECO:0007669"/>
    <property type="project" value="Ensembl"/>
</dbReference>
<dbReference type="GO" id="GO:0006955">
    <property type="term" value="P:immune response"/>
    <property type="evidence" value="ECO:0000318"/>
    <property type="project" value="GO_Central"/>
</dbReference>
<dbReference type="GO" id="GO:0006954">
    <property type="term" value="P:inflammatory response"/>
    <property type="evidence" value="ECO:0000303"/>
    <property type="project" value="BHF-UCL"/>
</dbReference>
<dbReference type="GO" id="GO:0097022">
    <property type="term" value="P:lymphocyte migration into lymph node"/>
    <property type="evidence" value="ECO:0000304"/>
    <property type="project" value="BHF-UCL"/>
</dbReference>
<dbReference type="GO" id="GO:0097029">
    <property type="term" value="P:mature conventional dendritic cell differentiation"/>
    <property type="evidence" value="ECO:0000250"/>
    <property type="project" value="BHF-UCL"/>
</dbReference>
<dbReference type="GO" id="GO:0002408">
    <property type="term" value="P:myeloid dendritic cell chemotaxis"/>
    <property type="evidence" value="ECO:0000314"/>
    <property type="project" value="BHF-UCL"/>
</dbReference>
<dbReference type="GO" id="GO:2000669">
    <property type="term" value="P:negative regulation of dendritic cell apoptotic process"/>
    <property type="evidence" value="ECO:0000305"/>
    <property type="project" value="BHF-UCL"/>
</dbReference>
<dbReference type="GO" id="GO:0032695">
    <property type="term" value="P:negative regulation of interleukin-12 production"/>
    <property type="evidence" value="ECO:0000250"/>
    <property type="project" value="BHF-UCL"/>
</dbReference>
<dbReference type="GO" id="GO:0045060">
    <property type="term" value="P:negative thymic T cell selection"/>
    <property type="evidence" value="ECO:0007669"/>
    <property type="project" value="Ensembl"/>
</dbReference>
<dbReference type="GO" id="GO:0030838">
    <property type="term" value="P:positive regulation of actin filament polymerization"/>
    <property type="evidence" value="ECO:0000305"/>
    <property type="project" value="BHF-UCL"/>
</dbReference>
<dbReference type="GO" id="GO:0043123">
    <property type="term" value="P:positive regulation of canonical NF-kappaB signal transduction"/>
    <property type="evidence" value="ECO:0000305"/>
    <property type="project" value="BHF-UCL"/>
</dbReference>
<dbReference type="GO" id="GO:0045785">
    <property type="term" value="P:positive regulation of cell adhesion"/>
    <property type="evidence" value="ECO:0000305"/>
    <property type="project" value="BHF-UCL"/>
</dbReference>
<dbReference type="GO" id="GO:2000147">
    <property type="term" value="P:positive regulation of cell motility"/>
    <property type="evidence" value="ECO:0000305"/>
    <property type="project" value="BHF-UCL"/>
</dbReference>
<dbReference type="GO" id="GO:0001954">
    <property type="term" value="P:positive regulation of cell-matrix adhesion"/>
    <property type="evidence" value="ECO:0000305"/>
    <property type="project" value="BHF-UCL"/>
</dbReference>
<dbReference type="GO" id="GO:0007204">
    <property type="term" value="P:positive regulation of cytosolic calcium ion concentration"/>
    <property type="evidence" value="ECO:0000318"/>
    <property type="project" value="GO_Central"/>
</dbReference>
<dbReference type="GO" id="GO:0002606">
    <property type="term" value="P:positive regulation of dendritic cell antigen processing and presentation"/>
    <property type="evidence" value="ECO:0000250"/>
    <property type="project" value="BHF-UCL"/>
</dbReference>
<dbReference type="GO" id="GO:2000510">
    <property type="term" value="P:positive regulation of dendritic cell chemotaxis"/>
    <property type="evidence" value="ECO:0000250"/>
    <property type="project" value="BHF-UCL"/>
</dbReference>
<dbReference type="GO" id="GO:0070374">
    <property type="term" value="P:positive regulation of ERK1 and ERK2 cascade"/>
    <property type="evidence" value="ECO:0000305"/>
    <property type="project" value="BHF-UCL"/>
</dbReference>
<dbReference type="GO" id="GO:0051491">
    <property type="term" value="P:positive regulation of filopodium assembly"/>
    <property type="evidence" value="ECO:0000305"/>
    <property type="project" value="BHF-UCL"/>
</dbReference>
<dbReference type="GO" id="GO:2000526">
    <property type="term" value="P:positive regulation of glycoprotein biosynthetic process involved in immunological synapse formation"/>
    <property type="evidence" value="ECO:0000250"/>
    <property type="project" value="BHF-UCL"/>
</dbReference>
<dbReference type="GO" id="GO:0002922">
    <property type="term" value="P:positive regulation of humoral immune response"/>
    <property type="evidence" value="ECO:0000250"/>
    <property type="project" value="BHF-UCL"/>
</dbReference>
<dbReference type="GO" id="GO:0002885">
    <property type="term" value="P:positive regulation of hypersensitivity"/>
    <property type="evidence" value="ECO:0000250"/>
    <property type="project" value="BHF-UCL"/>
</dbReference>
<dbReference type="GO" id="GO:2000522">
    <property type="term" value="P:positive regulation of immunological synapse formation"/>
    <property type="evidence" value="ECO:0000250"/>
    <property type="project" value="BHF-UCL"/>
</dbReference>
<dbReference type="GO" id="GO:0032735">
    <property type="term" value="P:positive regulation of interleukin-12 production"/>
    <property type="evidence" value="ECO:0000250"/>
    <property type="project" value="BHF-UCL"/>
</dbReference>
<dbReference type="GO" id="GO:0046330">
    <property type="term" value="P:positive regulation of JNK cascade"/>
    <property type="evidence" value="ECO:0000305"/>
    <property type="project" value="BHF-UCL"/>
</dbReference>
<dbReference type="GO" id="GO:0090023">
    <property type="term" value="P:positive regulation of neutrophil chemotaxis"/>
    <property type="evidence" value="ECO:0000314"/>
    <property type="project" value="BHF-UCL"/>
</dbReference>
<dbReference type="GO" id="GO:0051897">
    <property type="term" value="P:positive regulation of phosphatidylinositol 3-kinase/protein kinase B signal transduction"/>
    <property type="evidence" value="ECO:0000314"/>
    <property type="project" value="BHF-UCL"/>
</dbReference>
<dbReference type="GO" id="GO:0141214">
    <property type="term" value="P:positive regulation of phospholipase C/protein kinase C signal transduction"/>
    <property type="evidence" value="ECO:0000314"/>
    <property type="project" value="BHF-UCL"/>
</dbReference>
<dbReference type="GO" id="GO:0031274">
    <property type="term" value="P:positive regulation of pseudopodium assembly"/>
    <property type="evidence" value="ECO:0000305"/>
    <property type="project" value="BHF-UCL"/>
</dbReference>
<dbReference type="GO" id="GO:0035022">
    <property type="term" value="P:positive regulation of Rac protein signal transduction"/>
    <property type="evidence" value="ECO:0000250"/>
    <property type="project" value="BHF-UCL"/>
</dbReference>
<dbReference type="GO" id="GO:0048260">
    <property type="term" value="P:positive regulation of receptor-mediated endocytosis"/>
    <property type="evidence" value="ECO:0000250"/>
    <property type="project" value="BHF-UCL"/>
</dbReference>
<dbReference type="GO" id="GO:2000525">
    <property type="term" value="P:positive regulation of T cell costimulation"/>
    <property type="evidence" value="ECO:0000250"/>
    <property type="project" value="BHF-UCL"/>
</dbReference>
<dbReference type="GO" id="GO:0050862">
    <property type="term" value="P:positive regulation of T cell receptor signaling pathway"/>
    <property type="evidence" value="ECO:0007669"/>
    <property type="project" value="Ensembl"/>
</dbReference>
<dbReference type="GO" id="GO:0032489">
    <property type="term" value="P:regulation of Cdc42 protein signal transduction"/>
    <property type="evidence" value="ECO:0000250"/>
    <property type="project" value="BHF-UCL"/>
</dbReference>
<dbReference type="GO" id="GO:2000547">
    <property type="term" value="P:regulation of dendritic cell dendrite assembly"/>
    <property type="evidence" value="ECO:0000250"/>
    <property type="project" value="BHF-UCL"/>
</dbReference>
<dbReference type="GO" id="GO:0032651">
    <property type="term" value="P:regulation of interleukin-1 beta production"/>
    <property type="evidence" value="ECO:0000250"/>
    <property type="project" value="BHF-UCL"/>
</dbReference>
<dbReference type="GO" id="GO:0032649">
    <property type="term" value="P:regulation of type II interferon production"/>
    <property type="evidence" value="ECO:0000250"/>
    <property type="project" value="BHF-UCL"/>
</dbReference>
<dbReference type="GO" id="GO:0051209">
    <property type="term" value="P:release of sequestered calcium ion into cytosol"/>
    <property type="evidence" value="ECO:0000314"/>
    <property type="project" value="BHF-UCL"/>
</dbReference>
<dbReference type="GO" id="GO:0032496">
    <property type="term" value="P:response to lipopolysaccharide"/>
    <property type="evidence" value="ECO:0007669"/>
    <property type="project" value="Ensembl"/>
</dbReference>
<dbReference type="GO" id="GO:0071731">
    <property type="term" value="P:response to nitric oxide"/>
    <property type="evidence" value="ECO:0000305"/>
    <property type="project" value="BHF-UCL"/>
</dbReference>
<dbReference type="GO" id="GO:0031529">
    <property type="term" value="P:ruffle organization"/>
    <property type="evidence" value="ECO:0000305"/>
    <property type="project" value="BHF-UCL"/>
</dbReference>
<dbReference type="CDD" id="cd15175">
    <property type="entry name" value="7tmA_CCR7"/>
    <property type="match status" value="1"/>
</dbReference>
<dbReference type="FunFam" id="1.20.1070.10:FF:000035">
    <property type="entry name" value="C-C chemokine receptor type 6"/>
    <property type="match status" value="1"/>
</dbReference>
<dbReference type="Gene3D" id="1.20.1070.10">
    <property type="entry name" value="Rhodopsin 7-helix transmembrane proteins"/>
    <property type="match status" value="1"/>
</dbReference>
<dbReference type="InterPro" id="IPR050119">
    <property type="entry name" value="CCR1-9-like"/>
</dbReference>
<dbReference type="InterPro" id="IPR001718">
    <property type="entry name" value="Chemokine_CCR7"/>
</dbReference>
<dbReference type="InterPro" id="IPR000355">
    <property type="entry name" value="Chemokine_rcpt"/>
</dbReference>
<dbReference type="InterPro" id="IPR000276">
    <property type="entry name" value="GPCR_Rhodpsn"/>
</dbReference>
<dbReference type="InterPro" id="IPR017452">
    <property type="entry name" value="GPCR_Rhodpsn_7TM"/>
</dbReference>
<dbReference type="PANTHER" id="PTHR10489:SF635">
    <property type="entry name" value="C-C CHEMOKINE RECEPTOR TYPE 7"/>
    <property type="match status" value="1"/>
</dbReference>
<dbReference type="PANTHER" id="PTHR10489">
    <property type="entry name" value="CELL ADHESION MOLECULE"/>
    <property type="match status" value="1"/>
</dbReference>
<dbReference type="Pfam" id="PF00001">
    <property type="entry name" value="7tm_1"/>
    <property type="match status" value="1"/>
</dbReference>
<dbReference type="PRINTS" id="PR00657">
    <property type="entry name" value="CCCHEMOKINER"/>
</dbReference>
<dbReference type="PRINTS" id="PR00641">
    <property type="entry name" value="CHEMOKINER7"/>
</dbReference>
<dbReference type="PRINTS" id="PR00237">
    <property type="entry name" value="GPCRRHODOPSN"/>
</dbReference>
<dbReference type="SUPFAM" id="SSF81321">
    <property type="entry name" value="Family A G protein-coupled receptor-like"/>
    <property type="match status" value="1"/>
</dbReference>
<dbReference type="PROSITE" id="PS00237">
    <property type="entry name" value="G_PROTEIN_RECEP_F1_1"/>
    <property type="match status" value="1"/>
</dbReference>
<dbReference type="PROSITE" id="PS50262">
    <property type="entry name" value="G_PROTEIN_RECEP_F1_2"/>
    <property type="match status" value="1"/>
</dbReference>
<gene>
    <name type="primary">CCR7</name>
    <name type="synonym">CMKBR7</name>
    <name type="synonym">EBI1</name>
    <name type="synonym">EVI1</name>
</gene>
<protein>
    <recommendedName>
        <fullName>C-C chemokine receptor type 7</fullName>
        <shortName>C-C CKR-7</shortName>
        <shortName>CC-CKR-7</shortName>
        <shortName>CCR-7</shortName>
    </recommendedName>
    <alternativeName>
        <fullName>BLR2</fullName>
    </alternativeName>
    <alternativeName>
        <fullName>CDw197</fullName>
    </alternativeName>
    <alternativeName>
        <fullName>Epstein-Barr virus-induced G-protein coupled receptor 1</fullName>
        <shortName>EBI1</shortName>
        <shortName>EBV-induced G-protein coupled receptor 1</shortName>
    </alternativeName>
    <alternativeName>
        <fullName>MIP-3 beta receptor</fullName>
    </alternativeName>
    <cdAntigenName>CD197</cdAntigenName>
</protein>